<evidence type="ECO:0000255" key="1">
    <source>
        <dbReference type="HAMAP-Rule" id="MF_00142"/>
    </source>
</evidence>
<protein>
    <recommendedName>
        <fullName evidence="1">Iron-sulfur cluster assembly protein CyaY</fullName>
    </recommendedName>
</protein>
<keyword id="KW-0408">Iron</keyword>
<keyword id="KW-0479">Metal-binding</keyword>
<name>CYAY_RICAE</name>
<dbReference type="EMBL" id="CP001612">
    <property type="protein sequence ID" value="ACP53345.1"/>
    <property type="molecule type" value="Genomic_DNA"/>
</dbReference>
<dbReference type="RefSeq" id="WP_010977089.1">
    <property type="nucleotide sequence ID" value="NC_012633.1"/>
</dbReference>
<dbReference type="SMR" id="C3PN35"/>
<dbReference type="GeneID" id="928680"/>
<dbReference type="KEGG" id="raf:RAF_ORF0411"/>
<dbReference type="HOGENOM" id="CLU_080880_4_1_5"/>
<dbReference type="Proteomes" id="UP000002305">
    <property type="component" value="Chromosome"/>
</dbReference>
<dbReference type="GO" id="GO:0005737">
    <property type="term" value="C:cytoplasm"/>
    <property type="evidence" value="ECO:0007669"/>
    <property type="project" value="UniProtKB-ARBA"/>
</dbReference>
<dbReference type="GO" id="GO:0051537">
    <property type="term" value="F:2 iron, 2 sulfur cluster binding"/>
    <property type="evidence" value="ECO:0007669"/>
    <property type="project" value="TreeGrafter"/>
</dbReference>
<dbReference type="GO" id="GO:0008199">
    <property type="term" value="F:ferric iron binding"/>
    <property type="evidence" value="ECO:0007669"/>
    <property type="project" value="InterPro"/>
</dbReference>
<dbReference type="GO" id="GO:0008198">
    <property type="term" value="F:ferrous iron binding"/>
    <property type="evidence" value="ECO:0007669"/>
    <property type="project" value="TreeGrafter"/>
</dbReference>
<dbReference type="GO" id="GO:0004322">
    <property type="term" value="F:ferroxidase activity"/>
    <property type="evidence" value="ECO:0007669"/>
    <property type="project" value="TreeGrafter"/>
</dbReference>
<dbReference type="GO" id="GO:0034986">
    <property type="term" value="F:iron chaperone activity"/>
    <property type="evidence" value="ECO:0007669"/>
    <property type="project" value="TreeGrafter"/>
</dbReference>
<dbReference type="GO" id="GO:0006879">
    <property type="term" value="P:intracellular iron ion homeostasis"/>
    <property type="evidence" value="ECO:0007669"/>
    <property type="project" value="TreeGrafter"/>
</dbReference>
<dbReference type="GO" id="GO:0016226">
    <property type="term" value="P:iron-sulfur cluster assembly"/>
    <property type="evidence" value="ECO:0007669"/>
    <property type="project" value="UniProtKB-UniRule"/>
</dbReference>
<dbReference type="Gene3D" id="3.30.920.10">
    <property type="entry name" value="Frataxin/CyaY"/>
    <property type="match status" value="1"/>
</dbReference>
<dbReference type="HAMAP" id="MF_00142">
    <property type="entry name" value="CyaY"/>
    <property type="match status" value="1"/>
</dbReference>
<dbReference type="InterPro" id="IPR047584">
    <property type="entry name" value="CyaY"/>
</dbReference>
<dbReference type="InterPro" id="IPR002908">
    <property type="entry name" value="Frataxin/CyaY"/>
</dbReference>
<dbReference type="InterPro" id="IPR036524">
    <property type="entry name" value="Frataxin/CyaY_sf"/>
</dbReference>
<dbReference type="InterPro" id="IPR020895">
    <property type="entry name" value="Frataxin_CS"/>
</dbReference>
<dbReference type="NCBIfam" id="TIGR03421">
    <property type="entry name" value="FeS_CyaY"/>
    <property type="match status" value="1"/>
</dbReference>
<dbReference type="PANTHER" id="PTHR16821">
    <property type="entry name" value="FRATAXIN"/>
    <property type="match status" value="1"/>
</dbReference>
<dbReference type="PANTHER" id="PTHR16821:SF2">
    <property type="entry name" value="FRATAXIN, MITOCHONDRIAL"/>
    <property type="match status" value="1"/>
</dbReference>
<dbReference type="Pfam" id="PF01491">
    <property type="entry name" value="Frataxin_Cyay"/>
    <property type="match status" value="1"/>
</dbReference>
<dbReference type="SMART" id="SM01219">
    <property type="entry name" value="Frataxin_Cyay"/>
    <property type="match status" value="1"/>
</dbReference>
<dbReference type="SUPFAM" id="SSF55387">
    <property type="entry name" value="Frataxin/Nqo15-like"/>
    <property type="match status" value="1"/>
</dbReference>
<dbReference type="PROSITE" id="PS01344">
    <property type="entry name" value="FRATAXIN_1"/>
    <property type="match status" value="1"/>
</dbReference>
<dbReference type="PROSITE" id="PS50810">
    <property type="entry name" value="FRATAXIN_2"/>
    <property type="match status" value="1"/>
</dbReference>
<accession>C3PN35</accession>
<proteinExistence type="inferred from homology"/>
<gene>
    <name evidence="1" type="primary">cyaY</name>
    <name type="ordered locus">RAF_ORF0411</name>
</gene>
<sequence>MNNSEFSKIAETTIAYIAEKIEEQDKEASIDVDLQGDILNLDTDKGVYVINKQSAAKEIWLSSPVSGPYHFFYEQGEWTNRAGLELMAILTEELNIKFDTRPT</sequence>
<reference key="1">
    <citation type="journal article" date="2009" name="BMC Genomics">
        <title>Analysis of the Rickettsia africae genome reveals that virulence acquisition in Rickettsia species may be explained by genome reduction.</title>
        <authorList>
            <person name="Fournier P.-E."/>
            <person name="El Karkouri K."/>
            <person name="Leroy Q."/>
            <person name="Robert C."/>
            <person name="Giumelli B."/>
            <person name="Renesto P."/>
            <person name="Socolovschi C."/>
            <person name="Parola P."/>
            <person name="Audic S."/>
            <person name="Raoult D."/>
        </authorList>
    </citation>
    <scope>NUCLEOTIDE SEQUENCE [LARGE SCALE GENOMIC DNA]</scope>
    <source>
        <strain>ESF-5</strain>
    </source>
</reference>
<feature type="chain" id="PRO_1000203289" description="Iron-sulfur cluster assembly protein CyaY">
    <location>
        <begin position="1"/>
        <end position="103"/>
    </location>
</feature>
<organism>
    <name type="scientific">Rickettsia africae (strain ESF-5)</name>
    <dbReference type="NCBI Taxonomy" id="347255"/>
    <lineage>
        <taxon>Bacteria</taxon>
        <taxon>Pseudomonadati</taxon>
        <taxon>Pseudomonadota</taxon>
        <taxon>Alphaproteobacteria</taxon>
        <taxon>Rickettsiales</taxon>
        <taxon>Rickettsiaceae</taxon>
        <taxon>Rickettsieae</taxon>
        <taxon>Rickettsia</taxon>
        <taxon>spotted fever group</taxon>
    </lineage>
</organism>
<comment type="function">
    <text evidence="1">Involved in iron-sulfur (Fe-S) cluster assembly. May act as a regulator of Fe-S biogenesis.</text>
</comment>
<comment type="similarity">
    <text evidence="1">Belongs to the frataxin family.</text>
</comment>